<sequence length="1040" mass="116016">MSEQERIQDCLRKEIRSLLISTKDGLTPQQLEKEYLLMVGNHLPLRILGYRSTMELVLDMPDVVSVCPGGDGTVILKAIPDESTKGIASLVAKQRRSHKVRNSMPKGRPSICSGRVPYRGRVPPILPAVVKSELKDLLALSPVLLSDFEKAFARRFGRSFQYMQYGFLSMFEVLNAASDVISVEQTRAGSLLTLKKSVSEDKQRGWPAGKVFTQPFRMKQQGSYSTGFPVMKAHFSQPISNMEPPKQVLSMAKTPTFNSVEASRLNHTEKLNQLESTFKSVIAQIGPGGTVDPELKRKIQFVVSKFPQGLFISKLLGEFELTFKEQLSPKQLGFLNVTELVGALSDILRVEFSEERQDLLVFDADLKPLPSGGPLSSVRNSCLVQPDKKTEANPWTSSLSRNSLSTVAVKKTTWDCPLKNQKEPEQKIYKKPNLVVKPLQLQVETNKPQLSLSVANHDIPPDAVRAKKLCRLPPLDTSTLVGVFVEYIISPSQFYIRIYSRDSSELLEDMMIEMRRCYSNQLVSDRYIMPEYFIQPGHLCCVKISEDKWWYRVIIHRILGKKEVEVFYPDFGNIGTVQKSSLRFLKCCYTKLPAQAIPCSLAWVRPAEEHWTARAILHFQKLCGLKPLVGVVDEYIDGILNIFLCDTSSNEDVYFHHVLRTEGHAIVCRENAPSKGFRDFNPPALYTNASSAGDMVLTDLGHPAQQHYLNEDQEILQQAQQDINDGKCISYLKSAPKELLKDSKLSSLKTHKSCEEDPRWSILQPKDLKEENEDEVPTGMPCLESVTIGDDVWDENWLPLQAKMGKAGSPASQLFTSNLVGKKQYQTGGEMAQKDWCFSTSKDIWDDSWQPLGLANDVKGGIHTPEGPIAQEKNTSTTRIQQQPDLQYPLDSSTLPKLEEFYISLIKSQQSAERSQSEPASIQTHAGRAASKALSSTPAVGDSPENHSGSVESSPGSLKKEDVSNSRAEATAKDKSQGAIDQLSFILSPQHQISQKLYIPRSTATAVLGAAARLATSRSLLHWYPSVKGGKLEAERDGVK</sequence>
<name>TDRD5_MOUSE</name>
<proteinExistence type="evidence at protein level"/>
<evidence type="ECO:0000255" key="1">
    <source>
        <dbReference type="PROSITE-ProRule" id="PRU00211"/>
    </source>
</evidence>
<evidence type="ECO:0000255" key="2">
    <source>
        <dbReference type="PROSITE-ProRule" id="PRU00975"/>
    </source>
</evidence>
<evidence type="ECO:0000256" key="3">
    <source>
        <dbReference type="SAM" id="MobiDB-lite"/>
    </source>
</evidence>
<evidence type="ECO:0000269" key="4">
    <source>
    </source>
</evidence>
<evidence type="ECO:0000269" key="5">
    <source>
    </source>
</evidence>
<evidence type="ECO:0000303" key="6">
    <source>
    </source>
</evidence>
<evidence type="ECO:0000305" key="7"/>
<evidence type="ECO:0007744" key="8">
    <source>
    </source>
</evidence>
<keyword id="KW-0025">Alternative splicing</keyword>
<keyword id="KW-0963">Cytoplasm</keyword>
<keyword id="KW-0217">Developmental protein</keyword>
<keyword id="KW-0221">Differentiation</keyword>
<keyword id="KW-0597">Phosphoprotein</keyword>
<keyword id="KW-1185">Reference proteome</keyword>
<keyword id="KW-0677">Repeat</keyword>
<keyword id="KW-0744">Spermatogenesis</keyword>
<dbReference type="EMBL" id="AK132674">
    <property type="status" value="NOT_ANNOTATED_CDS"/>
    <property type="molecule type" value="mRNA"/>
</dbReference>
<dbReference type="EMBL" id="AK133026">
    <property type="status" value="NOT_ANNOTATED_CDS"/>
    <property type="molecule type" value="mRNA"/>
</dbReference>
<dbReference type="EMBL" id="AC161414">
    <property type="status" value="NOT_ANNOTATED_CDS"/>
    <property type="molecule type" value="Genomic_DNA"/>
</dbReference>
<dbReference type="EMBL" id="BC099972">
    <property type="protein sequence ID" value="AAH99972.1"/>
    <property type="molecule type" value="mRNA"/>
</dbReference>
<dbReference type="EMBL" id="AY522557">
    <property type="protein sequence ID" value="AAU04873.1"/>
    <property type="molecule type" value="mRNA"/>
</dbReference>
<dbReference type="CCDS" id="CCDS56647.1">
    <molecule id="Q5VCS6-1"/>
</dbReference>
<dbReference type="RefSeq" id="NP_001128213.1">
    <molecule id="Q5VCS6-1"/>
    <property type="nucleotide sequence ID" value="NM_001134741.1"/>
</dbReference>
<dbReference type="RefSeq" id="NP_001264659.1">
    <molecule id="Q5VCS6-2"/>
    <property type="nucleotide sequence ID" value="NM_001277730.1"/>
</dbReference>
<dbReference type="RefSeq" id="XP_006496796.1">
    <molecule id="Q5VCS6-2"/>
    <property type="nucleotide sequence ID" value="XM_006496733.3"/>
</dbReference>
<dbReference type="SMR" id="Q5VCS6"/>
<dbReference type="FunCoup" id="Q5VCS6">
    <property type="interactions" value="9"/>
</dbReference>
<dbReference type="STRING" id="10090.ENSMUSP00000137298"/>
<dbReference type="iPTMnet" id="Q5VCS6"/>
<dbReference type="PhosphoSitePlus" id="Q5VCS6"/>
<dbReference type="SwissPalm" id="Q5VCS6"/>
<dbReference type="jPOST" id="Q5VCS6"/>
<dbReference type="PaxDb" id="10090-ENSMUSP00000137298"/>
<dbReference type="ProteomicsDB" id="254686">
    <molecule id="Q5VCS6-1"/>
</dbReference>
<dbReference type="ProteomicsDB" id="254687">
    <molecule id="Q5VCS6-2"/>
</dbReference>
<dbReference type="Antibodypedia" id="2903">
    <property type="antibodies" value="18 antibodies from 11 providers"/>
</dbReference>
<dbReference type="Ensembl" id="ENSMUST00000121146.10">
    <molecule id="Q5VCS6-1"/>
    <property type="protein sequence ID" value="ENSMUSP00000137298.2"/>
    <property type="gene ID" value="ENSMUSG00000060985.16"/>
</dbReference>
<dbReference type="GeneID" id="214575"/>
<dbReference type="KEGG" id="mmu:214575"/>
<dbReference type="UCSC" id="uc029qui.1">
    <molecule id="Q5VCS6-1"/>
    <property type="organism name" value="mouse"/>
</dbReference>
<dbReference type="UCSC" id="uc029quj.1">
    <molecule id="Q5VCS6-2"/>
    <property type="organism name" value="mouse"/>
</dbReference>
<dbReference type="AGR" id="MGI:2684949"/>
<dbReference type="CTD" id="163589"/>
<dbReference type="MGI" id="MGI:2684949">
    <property type="gene designation" value="Tdrd5"/>
</dbReference>
<dbReference type="VEuPathDB" id="HostDB:ENSMUSG00000060985"/>
<dbReference type="eggNOG" id="KOG2039">
    <property type="taxonomic scope" value="Eukaryota"/>
</dbReference>
<dbReference type="GeneTree" id="ENSGT00940000159902"/>
<dbReference type="HOGENOM" id="CLU_013593_0_0_1"/>
<dbReference type="InParanoid" id="Q5VCS6"/>
<dbReference type="OMA" id="QFYIHIC"/>
<dbReference type="OrthoDB" id="10052065at2759"/>
<dbReference type="PhylomeDB" id="Q5VCS6"/>
<dbReference type="TreeFam" id="TF342664"/>
<dbReference type="BioGRID-ORCS" id="214575">
    <property type="hits" value="1 hit in 84 CRISPR screens"/>
</dbReference>
<dbReference type="CD-CODE" id="DE1E139C">
    <property type="entry name" value="Chromatoid body"/>
</dbReference>
<dbReference type="PRO" id="PR:Q5VCS6"/>
<dbReference type="Proteomes" id="UP000000589">
    <property type="component" value="Chromosome 1"/>
</dbReference>
<dbReference type="RNAct" id="Q5VCS6">
    <property type="molecule type" value="protein"/>
</dbReference>
<dbReference type="Bgee" id="ENSMUSG00000060985">
    <property type="expression patterns" value="Expressed in spermatocyte and 53 other cell types or tissues"/>
</dbReference>
<dbReference type="ExpressionAtlas" id="Q5VCS6">
    <property type="expression patterns" value="baseline and differential"/>
</dbReference>
<dbReference type="GO" id="GO:0033391">
    <property type="term" value="C:chromatoid body"/>
    <property type="evidence" value="ECO:0000314"/>
    <property type="project" value="UniProtKB"/>
</dbReference>
<dbReference type="GO" id="GO:0071546">
    <property type="term" value="C:pi-body"/>
    <property type="evidence" value="ECO:0000314"/>
    <property type="project" value="UniProtKB"/>
</dbReference>
<dbReference type="GO" id="GO:0045202">
    <property type="term" value="C:synapse"/>
    <property type="evidence" value="ECO:0000314"/>
    <property type="project" value="SynGO"/>
</dbReference>
<dbReference type="GO" id="GO:0030719">
    <property type="term" value="P:P granule organization"/>
    <property type="evidence" value="ECO:0000315"/>
    <property type="project" value="UniProtKB"/>
</dbReference>
<dbReference type="GO" id="GO:0007286">
    <property type="term" value="P:spermatid development"/>
    <property type="evidence" value="ECO:0000315"/>
    <property type="project" value="UniProtKB"/>
</dbReference>
<dbReference type="GO" id="GO:0141196">
    <property type="term" value="P:transposable element silencing by piRNA-mediated DNA methylation"/>
    <property type="evidence" value="ECO:0000315"/>
    <property type="project" value="UniProtKB"/>
</dbReference>
<dbReference type="CDD" id="cd09985">
    <property type="entry name" value="LOTUS_1_TDRD5"/>
    <property type="match status" value="1"/>
</dbReference>
<dbReference type="CDD" id="cd09975">
    <property type="entry name" value="LOTUS_2_TDRD5"/>
    <property type="match status" value="1"/>
</dbReference>
<dbReference type="CDD" id="cd09976">
    <property type="entry name" value="LOTUS_3_TDRD5"/>
    <property type="match status" value="1"/>
</dbReference>
<dbReference type="CDD" id="cd20419">
    <property type="entry name" value="Tudor_TDRD5"/>
    <property type="match status" value="1"/>
</dbReference>
<dbReference type="FunFam" id="2.30.30.140:FF:000051">
    <property type="entry name" value="Tudor domain-containing protein 5"/>
    <property type="match status" value="1"/>
</dbReference>
<dbReference type="FunFam" id="3.30.420.610:FF:000005">
    <property type="entry name" value="Tudor domain-containing protein 5"/>
    <property type="match status" value="1"/>
</dbReference>
<dbReference type="FunFam" id="3.30.420.610:FF:000007">
    <property type="entry name" value="Tudor domain-containing protein 5"/>
    <property type="match status" value="1"/>
</dbReference>
<dbReference type="FunFam" id="3.30.420.610:FF:000011">
    <property type="entry name" value="tudor domain-containing protein 5 isoform X3"/>
    <property type="match status" value="1"/>
</dbReference>
<dbReference type="Gene3D" id="2.30.30.140">
    <property type="match status" value="1"/>
</dbReference>
<dbReference type="Gene3D" id="2.40.50.90">
    <property type="match status" value="1"/>
</dbReference>
<dbReference type="Gene3D" id="3.30.420.610">
    <property type="entry name" value="LOTUS domain-like"/>
    <property type="match status" value="3"/>
</dbReference>
<dbReference type="InterPro" id="IPR041966">
    <property type="entry name" value="LOTUS-like"/>
</dbReference>
<dbReference type="InterPro" id="IPR025605">
    <property type="entry name" value="OST-HTH/LOTUS_dom"/>
</dbReference>
<dbReference type="InterPro" id="IPR035437">
    <property type="entry name" value="SNase_OB-fold_sf"/>
</dbReference>
<dbReference type="InterPro" id="IPR037982">
    <property type="entry name" value="TDRD5_LOTUS_2"/>
</dbReference>
<dbReference type="InterPro" id="IPR002999">
    <property type="entry name" value="Tudor"/>
</dbReference>
<dbReference type="InterPro" id="IPR050621">
    <property type="entry name" value="Tudor_domain_containing"/>
</dbReference>
<dbReference type="PANTHER" id="PTHR22948">
    <property type="entry name" value="TUDOR DOMAIN CONTAINING PROTEIN"/>
    <property type="match status" value="1"/>
</dbReference>
<dbReference type="PANTHER" id="PTHR22948:SF19">
    <property type="entry name" value="TUDOR DOMAIN-CONTAINING PROTEIN 5"/>
    <property type="match status" value="1"/>
</dbReference>
<dbReference type="Pfam" id="PF12872">
    <property type="entry name" value="OST-HTH"/>
    <property type="match status" value="3"/>
</dbReference>
<dbReference type="Pfam" id="PF00567">
    <property type="entry name" value="TUDOR"/>
    <property type="match status" value="1"/>
</dbReference>
<dbReference type="SMART" id="SM00333">
    <property type="entry name" value="TUDOR"/>
    <property type="match status" value="1"/>
</dbReference>
<dbReference type="SUPFAM" id="SSF63748">
    <property type="entry name" value="Tudor/PWWP/MBT"/>
    <property type="match status" value="1"/>
</dbReference>
<dbReference type="PROSITE" id="PS51644">
    <property type="entry name" value="HTH_OST"/>
    <property type="match status" value="3"/>
</dbReference>
<dbReference type="PROSITE" id="PS50304">
    <property type="entry name" value="TUDOR"/>
    <property type="match status" value="1"/>
</dbReference>
<reference key="1">
    <citation type="journal article" date="2005" name="Science">
        <title>The transcriptional landscape of the mammalian genome.</title>
        <authorList>
            <person name="Carninci P."/>
            <person name="Kasukawa T."/>
            <person name="Katayama S."/>
            <person name="Gough J."/>
            <person name="Frith M.C."/>
            <person name="Maeda N."/>
            <person name="Oyama R."/>
            <person name="Ravasi T."/>
            <person name="Lenhard B."/>
            <person name="Wells C."/>
            <person name="Kodzius R."/>
            <person name="Shimokawa K."/>
            <person name="Bajic V.B."/>
            <person name="Brenner S.E."/>
            <person name="Batalov S."/>
            <person name="Forrest A.R."/>
            <person name="Zavolan M."/>
            <person name="Davis M.J."/>
            <person name="Wilming L.G."/>
            <person name="Aidinis V."/>
            <person name="Allen J.E."/>
            <person name="Ambesi-Impiombato A."/>
            <person name="Apweiler R."/>
            <person name="Aturaliya R.N."/>
            <person name="Bailey T.L."/>
            <person name="Bansal M."/>
            <person name="Baxter L."/>
            <person name="Beisel K.W."/>
            <person name="Bersano T."/>
            <person name="Bono H."/>
            <person name="Chalk A.M."/>
            <person name="Chiu K.P."/>
            <person name="Choudhary V."/>
            <person name="Christoffels A."/>
            <person name="Clutterbuck D.R."/>
            <person name="Crowe M.L."/>
            <person name="Dalla E."/>
            <person name="Dalrymple B.P."/>
            <person name="de Bono B."/>
            <person name="Della Gatta G."/>
            <person name="di Bernardo D."/>
            <person name="Down T."/>
            <person name="Engstrom P."/>
            <person name="Fagiolini M."/>
            <person name="Faulkner G."/>
            <person name="Fletcher C.F."/>
            <person name="Fukushima T."/>
            <person name="Furuno M."/>
            <person name="Futaki S."/>
            <person name="Gariboldi M."/>
            <person name="Georgii-Hemming P."/>
            <person name="Gingeras T.R."/>
            <person name="Gojobori T."/>
            <person name="Green R.E."/>
            <person name="Gustincich S."/>
            <person name="Harbers M."/>
            <person name="Hayashi Y."/>
            <person name="Hensch T.K."/>
            <person name="Hirokawa N."/>
            <person name="Hill D."/>
            <person name="Huminiecki L."/>
            <person name="Iacono M."/>
            <person name="Ikeo K."/>
            <person name="Iwama A."/>
            <person name="Ishikawa T."/>
            <person name="Jakt M."/>
            <person name="Kanapin A."/>
            <person name="Katoh M."/>
            <person name="Kawasawa Y."/>
            <person name="Kelso J."/>
            <person name="Kitamura H."/>
            <person name="Kitano H."/>
            <person name="Kollias G."/>
            <person name="Krishnan S.P."/>
            <person name="Kruger A."/>
            <person name="Kummerfeld S.K."/>
            <person name="Kurochkin I.V."/>
            <person name="Lareau L.F."/>
            <person name="Lazarevic D."/>
            <person name="Lipovich L."/>
            <person name="Liu J."/>
            <person name="Liuni S."/>
            <person name="McWilliam S."/>
            <person name="Madan Babu M."/>
            <person name="Madera M."/>
            <person name="Marchionni L."/>
            <person name="Matsuda H."/>
            <person name="Matsuzawa S."/>
            <person name="Miki H."/>
            <person name="Mignone F."/>
            <person name="Miyake S."/>
            <person name="Morris K."/>
            <person name="Mottagui-Tabar S."/>
            <person name="Mulder N."/>
            <person name="Nakano N."/>
            <person name="Nakauchi H."/>
            <person name="Ng P."/>
            <person name="Nilsson R."/>
            <person name="Nishiguchi S."/>
            <person name="Nishikawa S."/>
            <person name="Nori F."/>
            <person name="Ohara O."/>
            <person name="Okazaki Y."/>
            <person name="Orlando V."/>
            <person name="Pang K.C."/>
            <person name="Pavan W.J."/>
            <person name="Pavesi G."/>
            <person name="Pesole G."/>
            <person name="Petrovsky N."/>
            <person name="Piazza S."/>
            <person name="Reed J."/>
            <person name="Reid J.F."/>
            <person name="Ring B.Z."/>
            <person name="Ringwald M."/>
            <person name="Rost B."/>
            <person name="Ruan Y."/>
            <person name="Salzberg S.L."/>
            <person name="Sandelin A."/>
            <person name="Schneider C."/>
            <person name="Schoenbach C."/>
            <person name="Sekiguchi K."/>
            <person name="Semple C.A."/>
            <person name="Seno S."/>
            <person name="Sessa L."/>
            <person name="Sheng Y."/>
            <person name="Shibata Y."/>
            <person name="Shimada H."/>
            <person name="Shimada K."/>
            <person name="Silva D."/>
            <person name="Sinclair B."/>
            <person name="Sperling S."/>
            <person name="Stupka E."/>
            <person name="Sugiura K."/>
            <person name="Sultana R."/>
            <person name="Takenaka Y."/>
            <person name="Taki K."/>
            <person name="Tammoja K."/>
            <person name="Tan S.L."/>
            <person name="Tang S."/>
            <person name="Taylor M.S."/>
            <person name="Tegner J."/>
            <person name="Teichmann S.A."/>
            <person name="Ueda H.R."/>
            <person name="van Nimwegen E."/>
            <person name="Verardo R."/>
            <person name="Wei C.L."/>
            <person name="Yagi K."/>
            <person name="Yamanishi H."/>
            <person name="Zabarovsky E."/>
            <person name="Zhu S."/>
            <person name="Zimmer A."/>
            <person name="Hide W."/>
            <person name="Bult C."/>
            <person name="Grimmond S.M."/>
            <person name="Teasdale R.D."/>
            <person name="Liu E.T."/>
            <person name="Brusic V."/>
            <person name="Quackenbush J."/>
            <person name="Wahlestedt C."/>
            <person name="Mattick J.S."/>
            <person name="Hume D.A."/>
            <person name="Kai C."/>
            <person name="Sasaki D."/>
            <person name="Tomaru Y."/>
            <person name="Fukuda S."/>
            <person name="Kanamori-Katayama M."/>
            <person name="Suzuki M."/>
            <person name="Aoki J."/>
            <person name="Arakawa T."/>
            <person name="Iida J."/>
            <person name="Imamura K."/>
            <person name="Itoh M."/>
            <person name="Kato T."/>
            <person name="Kawaji H."/>
            <person name="Kawagashira N."/>
            <person name="Kawashima T."/>
            <person name="Kojima M."/>
            <person name="Kondo S."/>
            <person name="Konno H."/>
            <person name="Nakano K."/>
            <person name="Ninomiya N."/>
            <person name="Nishio T."/>
            <person name="Okada M."/>
            <person name="Plessy C."/>
            <person name="Shibata K."/>
            <person name="Shiraki T."/>
            <person name="Suzuki S."/>
            <person name="Tagami M."/>
            <person name="Waki K."/>
            <person name="Watahiki A."/>
            <person name="Okamura-Oho Y."/>
            <person name="Suzuki H."/>
            <person name="Kawai J."/>
            <person name="Hayashizaki Y."/>
        </authorList>
    </citation>
    <scope>NUCLEOTIDE SEQUENCE [LARGE SCALE MRNA] (ISOFORM 1)</scope>
</reference>
<reference key="2">
    <citation type="journal article" date="2009" name="PLoS Biol.">
        <title>Lineage-specific biology revealed by a finished genome assembly of the mouse.</title>
        <authorList>
            <person name="Church D.M."/>
            <person name="Goodstadt L."/>
            <person name="Hillier L.W."/>
            <person name="Zody M.C."/>
            <person name="Goldstein S."/>
            <person name="She X."/>
            <person name="Bult C.J."/>
            <person name="Agarwala R."/>
            <person name="Cherry J.L."/>
            <person name="DiCuccio M."/>
            <person name="Hlavina W."/>
            <person name="Kapustin Y."/>
            <person name="Meric P."/>
            <person name="Maglott D."/>
            <person name="Birtle Z."/>
            <person name="Marques A.C."/>
            <person name="Graves T."/>
            <person name="Zhou S."/>
            <person name="Teague B."/>
            <person name="Potamousis K."/>
            <person name="Churas C."/>
            <person name="Place M."/>
            <person name="Herschleb J."/>
            <person name="Runnheim R."/>
            <person name="Forrest D."/>
            <person name="Amos-Landgraf J."/>
            <person name="Schwartz D.C."/>
            <person name="Cheng Z."/>
            <person name="Lindblad-Toh K."/>
            <person name="Eichler E.E."/>
            <person name="Ponting C.P."/>
        </authorList>
    </citation>
    <scope>NUCLEOTIDE SEQUENCE [LARGE SCALE GENOMIC DNA]</scope>
    <source>
        <strain>C57BL/6J</strain>
    </source>
</reference>
<reference key="3">
    <citation type="journal article" date="2004" name="Genome Res.">
        <title>The status, quality, and expansion of the NIH full-length cDNA project: the Mammalian Gene Collection (MGC).</title>
        <authorList>
            <consortium name="The MGC Project Team"/>
        </authorList>
    </citation>
    <scope>NUCLEOTIDE SEQUENCE [LARGE SCALE MRNA] (ISOFORM 2)</scope>
    <source>
        <strain>C57BL/6J</strain>
        <tissue>Embryo</tissue>
    </source>
</reference>
<reference key="4">
    <citation type="journal article" date="2004" name="Gene Expr. Patterns">
        <title>Expression of the tudor-related gene Tdrd5 during development of the male germline in mice.</title>
        <authorList>
            <person name="Smith J.M."/>
            <person name="Bowles J."/>
            <person name="Wilson M."/>
            <person name="Teasdale R.D."/>
            <person name="Koopman P."/>
        </authorList>
    </citation>
    <scope>NUCLEOTIDE SEQUENCE [MRNA] OF 367-955 (ISOFORM 1)</scope>
    <scope>TISSUE SPECIFICITY</scope>
    <scope>DEVELOPMENTAL STAGE</scope>
</reference>
<reference key="5">
    <citation type="journal article" date="2010" name="Cell">
        <title>A tissue-specific atlas of mouse protein phosphorylation and expression.</title>
        <authorList>
            <person name="Huttlin E.L."/>
            <person name="Jedrychowski M.P."/>
            <person name="Elias J.E."/>
            <person name="Goswami T."/>
            <person name="Rad R."/>
            <person name="Beausoleil S.A."/>
            <person name="Villen J."/>
            <person name="Haas W."/>
            <person name="Sowa M.E."/>
            <person name="Gygi S.P."/>
        </authorList>
    </citation>
    <scope>PHOSPHORYLATION [LARGE SCALE ANALYSIS] AT SER-809 AND SER-943</scope>
    <scope>IDENTIFICATION BY MASS SPECTROMETRY [LARGE SCALE ANALYSIS]</scope>
    <source>
        <tissue>Testis</tissue>
    </source>
</reference>
<reference key="6">
    <citation type="journal article" date="2011" name="J. Cell Biol.">
        <title>TDRD5 is required for retrotransposon silencing, chromatoid body assembly, and spermiogenesis in mice.</title>
        <authorList>
            <person name="Yabuta Y."/>
            <person name="Ohta H."/>
            <person name="Abe T."/>
            <person name="Kurimoto K."/>
            <person name="Chuma S."/>
            <person name="Saitou M."/>
        </authorList>
    </citation>
    <scope>FUNCTION</scope>
    <scope>SUBCELLULAR LOCATION</scope>
    <scope>TISSUE SPECIFICITY</scope>
    <scope>DEVELOPMENTAL STAGE</scope>
    <scope>DISRUPTION PHENOTYPE</scope>
</reference>
<feature type="chain" id="PRO_0000281122" description="Tudor domain-containing protein 5">
    <location>
        <begin position="1"/>
        <end position="1040"/>
    </location>
</feature>
<feature type="domain" description="HTH OST-type 1" evidence="2">
    <location>
        <begin position="7"/>
        <end position="80"/>
    </location>
</feature>
<feature type="domain" description="HTH OST-type 2" evidence="2">
    <location>
        <begin position="122"/>
        <end position="197"/>
    </location>
</feature>
<feature type="domain" description="HTH OST-type 3" evidence="2">
    <location>
        <begin position="291"/>
        <end position="365"/>
    </location>
</feature>
<feature type="domain" description="Tudor" evidence="1">
    <location>
        <begin position="533"/>
        <end position="592"/>
    </location>
</feature>
<feature type="region of interest" description="Disordered" evidence="3">
    <location>
        <begin position="857"/>
        <end position="891"/>
    </location>
</feature>
<feature type="region of interest" description="Disordered" evidence="3">
    <location>
        <begin position="912"/>
        <end position="975"/>
    </location>
</feature>
<feature type="compositionally biased region" description="Polar residues" evidence="3">
    <location>
        <begin position="872"/>
        <end position="891"/>
    </location>
</feature>
<feature type="compositionally biased region" description="Polar residues" evidence="3">
    <location>
        <begin position="912"/>
        <end position="924"/>
    </location>
</feature>
<feature type="compositionally biased region" description="Polar residues" evidence="3">
    <location>
        <begin position="946"/>
        <end position="956"/>
    </location>
</feature>
<feature type="compositionally biased region" description="Basic and acidic residues" evidence="3">
    <location>
        <begin position="958"/>
        <end position="975"/>
    </location>
</feature>
<feature type="modified residue" description="Phosphoserine" evidence="8">
    <location>
        <position position="809"/>
    </location>
</feature>
<feature type="modified residue" description="Phosphoserine" evidence="8">
    <location>
        <position position="943"/>
    </location>
</feature>
<feature type="splice variant" id="VSP_041054" description="In isoform 2." evidence="6">
    <original>SELKDLLALSPVLLSDFEKAFARRFGRSFQYMQYGFLSMFEVLNAASDVISVEQTRAGSLLTLKKSVSEDKQRGWPAGKVFTQPFRMKQQGSYSTG</original>
    <variation>R</variation>
    <location>
        <begin position="132"/>
        <end position="227"/>
    </location>
</feature>
<feature type="sequence conflict" description="In Ref. 4; AAU04873." evidence="7" ref="4">
    <original>E</original>
    <variation>G</variation>
    <location>
        <position position="662"/>
    </location>
</feature>
<feature type="sequence conflict" description="In Ref. 4; AAU04873." evidence="7" ref="4">
    <original>K</original>
    <variation>E</variation>
    <location>
        <position position="675"/>
    </location>
</feature>
<feature type="sequence conflict" description="In Ref. 4; AAU04873." evidence="7" ref="4">
    <original>D</original>
    <variation>N</variation>
    <location>
        <position position="694"/>
    </location>
</feature>
<feature type="sequence conflict" description="In Ref. 4; AAU04873." evidence="7" ref="4">
    <original>G</original>
    <variation>E</variation>
    <location>
        <position position="726"/>
    </location>
</feature>
<comment type="function">
    <text evidence="5">Required during spermiogenesis to participate in the repression transposable elements and prevent their mobilization, which is essential for the germline integrity. Probably acts via the piRNA metabolic process, which mediates the repression of transposable elements during meiosis by forming complexes composed of piRNAs and Piwi proteins and govern the methylation and subsequent repression of transposons. Required for chromatoid body (CB) assembly.</text>
</comment>
<comment type="subcellular location">
    <subcellularLocation>
        <location evidence="5">Cytoplasm</location>
    </subcellularLocation>
    <text>Localizes to chromatoid body (CB) and pi-body (also called intermitochondrial cementin), 2 cytoplasmic ribonucleoprotein granules involved in RNA processing for spermatogenesis.</text>
</comment>
<comment type="alternative products">
    <event type="alternative splicing"/>
    <isoform>
        <id>Q5VCS6-1</id>
        <name>1</name>
        <sequence type="displayed"/>
    </isoform>
    <isoform>
        <id>Q5VCS6-2</id>
        <name>2</name>
        <sequence type="described" ref="VSP_041054"/>
    </isoform>
</comment>
<comment type="tissue specificity">
    <text evidence="4 5">Gonad-specific. Mainly expressed in testis. Present at low level in ovary (at protein level).</text>
</comment>
<comment type="developmental stage">
    <text evidence="4 5">Specifically expressed in germ cells of the developing testis, starting from 12.5 dpc. The protein is detected as early as 13.5 dpc in embryonic testes, but expression declines around the perinatal period and then is restored at around 2 weeks after birth. Also detected in the embryonic ovary at a low level. In adult testis, mainly present in the spermatocytes from the pachytene stage onward (at protein level).</text>
</comment>
<comment type="disruption phenotype">
    <text evidence="5">Male sterility because of spermiogenic arrest at the round spermatid stage, with occasional failure in meiotic prophase. Effects are due to demethylation and subsequent derepression of transposable elements: germ cells fail to repress LINE-1 (L1) retrotransposons with DNA-demethylated promoters. Defects in chromatoid body (CB) and pi-body assembly are also observed. Interestingly, Tdrd5-deficient round spermatids injected into oocytes contribute to fertile offspring, showing that acquisition of a functional haploid genome may be uncoupled from Tdrd5 function.</text>
</comment>
<comment type="similarity">
    <text evidence="7">Belongs to the TDRD5 family.</text>
</comment>
<organism>
    <name type="scientific">Mus musculus</name>
    <name type="common">Mouse</name>
    <dbReference type="NCBI Taxonomy" id="10090"/>
    <lineage>
        <taxon>Eukaryota</taxon>
        <taxon>Metazoa</taxon>
        <taxon>Chordata</taxon>
        <taxon>Craniata</taxon>
        <taxon>Vertebrata</taxon>
        <taxon>Euteleostomi</taxon>
        <taxon>Mammalia</taxon>
        <taxon>Eutheria</taxon>
        <taxon>Euarchontoglires</taxon>
        <taxon>Glires</taxon>
        <taxon>Rodentia</taxon>
        <taxon>Myomorpha</taxon>
        <taxon>Muroidea</taxon>
        <taxon>Muridae</taxon>
        <taxon>Murinae</taxon>
        <taxon>Mus</taxon>
        <taxon>Mus</taxon>
    </lineage>
</organism>
<accession>Q5VCS6</accession>
<accession>A7YQ76</accession>
<accession>D3YXM4</accession>
<gene>
    <name type="primary">Tdrd5</name>
    <name type="synonym">Gm103</name>
</gene>
<protein>
    <recommendedName>
        <fullName>Tudor domain-containing protein 5</fullName>
    </recommendedName>
</protein>